<protein>
    <recommendedName>
        <fullName evidence="3">Allatotropin-related peptide</fullName>
        <shortName evidence="3">ATRP</shortName>
    </recommendedName>
</protein>
<evidence type="ECO:0000250" key="1">
    <source>
        <dbReference type="UniProtKB" id="P21786"/>
    </source>
</evidence>
<evidence type="ECO:0000269" key="2">
    <source>
    </source>
</evidence>
<evidence type="ECO:0000303" key="3">
    <source>
    </source>
</evidence>
<evidence type="ECO:0000305" key="4"/>
<name>ALLTR_EUSSE</name>
<sequence length="13" mass="1368">GFKNVALSTARGF</sequence>
<proteinExistence type="evidence at protein level"/>
<dbReference type="GO" id="GO:0005576">
    <property type="term" value="C:extracellular region"/>
    <property type="evidence" value="ECO:0000250"/>
    <property type="project" value="UniProtKB"/>
</dbReference>
<dbReference type="GO" id="GO:0007218">
    <property type="term" value="P:neuropeptide signaling pathway"/>
    <property type="evidence" value="ECO:0007669"/>
    <property type="project" value="UniProtKB-KW"/>
</dbReference>
<comment type="subcellular location">
    <subcellularLocation>
        <location evidence="1">Secreted</location>
    </subcellularLocation>
</comment>
<comment type="tissue specificity">
    <text evidence="2">Expressed in the posterior region of the abdominal ventral nerve cord and in the fourth abdominal nerves (at protein level).</text>
</comment>
<comment type="mass spectrometry" mass="1366.8" method="MALDI" evidence="2"/>
<reference evidence="4" key="1">
    <citation type="journal article" date="2009" name="Peptides">
        <title>Neuropeptides in Heteroptera: identification of allatotropin-related peptide and tachykinin-related peptides using MALDI-TOF mass spectrometry.</title>
        <authorList>
            <person name="Neupert S."/>
            <person name="Russell W.K."/>
            <person name="Russell D.H."/>
            <person name="Lopez J.D. Jr."/>
            <person name="Predel R."/>
            <person name="Nachman R.J."/>
        </authorList>
    </citation>
    <scope>PROTEIN SEQUENCE</scope>
    <scope>TISSUE SPECIFICITY</scope>
    <scope>MASS SPECTROMETRY</scope>
    <scope>AMIDATION AT PHE-13</scope>
    <source>
        <tissue evidence="2">Ventral nerve cord</tissue>
    </source>
</reference>
<feature type="peptide" id="PRO_0000395621" description="Allatotropin-related peptide" evidence="2">
    <location>
        <begin position="1"/>
        <end position="13"/>
    </location>
</feature>
<feature type="modified residue" description="Phenylalanine amide" evidence="2">
    <location>
        <position position="13"/>
    </location>
</feature>
<accession>P86552</accession>
<organism>
    <name type="scientific">Euschistus servus</name>
    <name type="common">Brown stink bug</name>
    <dbReference type="NCBI Taxonomy" id="756488"/>
    <lineage>
        <taxon>Eukaryota</taxon>
        <taxon>Metazoa</taxon>
        <taxon>Ecdysozoa</taxon>
        <taxon>Arthropoda</taxon>
        <taxon>Hexapoda</taxon>
        <taxon>Insecta</taxon>
        <taxon>Pterygota</taxon>
        <taxon>Neoptera</taxon>
        <taxon>Paraneoptera</taxon>
        <taxon>Hemiptera</taxon>
        <taxon>Heteroptera</taxon>
        <taxon>Panheteroptera</taxon>
        <taxon>Pentatomomorpha</taxon>
        <taxon>Pentatomoidea</taxon>
        <taxon>Pentatomidae</taxon>
        <taxon>Pentatominae</taxon>
        <taxon>Euschistus</taxon>
    </lineage>
</organism>
<keyword id="KW-0027">Amidation</keyword>
<keyword id="KW-0903">Direct protein sequencing</keyword>
<keyword id="KW-0527">Neuropeptide</keyword>
<keyword id="KW-0964">Secreted</keyword>